<keyword id="KW-0149">Chlorophyll biosynthesis</keyword>
<keyword id="KW-0150">Chloroplast</keyword>
<keyword id="KW-0350">Heme biosynthesis</keyword>
<keyword id="KW-0560">Oxidoreductase</keyword>
<keyword id="KW-0934">Plastid</keyword>
<keyword id="KW-0627">Porphyrin biosynthesis</keyword>
<keyword id="KW-0809">Transit peptide</keyword>
<gene>
    <name type="primary">CPX</name>
</gene>
<name>HEM6_HORVU</name>
<reference key="1">
    <citation type="journal article" date="1995" name="Planta">
        <title>Coproporphyrinogen III oxidase from barley and tobacco -- sequence analysis and initial expression studies.</title>
        <authorList>
            <person name="Kruse E."/>
            <person name="Mock H.-P."/>
            <person name="Grimm B."/>
        </authorList>
    </citation>
    <scope>NUCLEOTIDE SEQUENCE [MRNA]</scope>
    <source>
        <strain>cv. Svalofs Bonus</strain>
        <tissue>Leaf</tissue>
    </source>
</reference>
<proteinExistence type="evidence at transcript level"/>
<evidence type="ECO:0000250" key="1"/>
<evidence type="ECO:0000255" key="2"/>
<evidence type="ECO:0000256" key="3">
    <source>
        <dbReference type="SAM" id="MobiDB-lite"/>
    </source>
</evidence>
<evidence type="ECO:0000305" key="4"/>
<feature type="transit peptide" description="Chloroplast" evidence="2">
    <location>
        <begin position="1"/>
        <end status="unknown"/>
    </location>
</feature>
<feature type="chain" id="PRO_0000006032" description="Oxygen-dependent coproporphyrinogen-III oxidase, chloroplastic">
    <location>
        <begin status="unknown"/>
        <end position="391"/>
    </location>
</feature>
<feature type="region of interest" description="Disordered" evidence="3">
    <location>
        <begin position="1"/>
        <end position="34"/>
    </location>
</feature>
<feature type="region of interest" description="Important for dimerization" evidence="1">
    <location>
        <begin position="125"/>
        <end position="134"/>
    </location>
</feature>
<feature type="region of interest" description="Important for dimerization" evidence="1">
    <location>
        <begin position="331"/>
        <end position="366"/>
    </location>
</feature>
<feature type="compositionally biased region" description="Polar residues" evidence="3">
    <location>
        <begin position="1"/>
        <end position="13"/>
    </location>
</feature>
<feature type="compositionally biased region" description="Low complexity" evidence="3">
    <location>
        <begin position="14"/>
        <end position="30"/>
    </location>
</feature>
<feature type="active site" description="Proton donor" evidence="1">
    <location>
        <position position="193"/>
    </location>
</feature>
<feature type="binding site" evidence="1">
    <location>
        <position position="179"/>
    </location>
    <ligand>
        <name>substrate</name>
    </ligand>
</feature>
<feature type="binding site" evidence="1">
    <location>
        <begin position="195"/>
        <end position="197"/>
    </location>
    <ligand>
        <name>substrate</name>
    </ligand>
</feature>
<feature type="binding site" evidence="1">
    <location>
        <begin position="349"/>
        <end position="354"/>
    </location>
    <ligand>
        <name>substrate</name>
    </ligand>
</feature>
<feature type="site" description="Important for dimerization" evidence="1">
    <location>
        <position position="266"/>
    </location>
</feature>
<sequence length="391" mass="43556">MASSLLTTPSQTLAPNPAAARARRSSPAAAQVSFSSPLLPGRRALRCARPVAIEKEVPEKEAPTTFLREDGSGAGSGSVRERFEGMIRRVQGEICAALEEADGSGKRFVEDVWSRPGGVCVHSRVLQDGNVFEKAGVNVSAVIGVCPRSAYRAAKGAAKNGAADGHKAGPVPFFSAGISSVLHPKNPFAPTLHFNYRYFETDAPKDVPGAPRSWWFGGGTDLTPSYLIEEDVKHFHSVQKQTCDKFDPSFYPRFKKWCDDYFYIKHRNERRGLGGIFFDDLNDYDQDMLLNFATECAGSVIPAYIPIIERRKDTPFNEEQKAWQQVRRGRYVEFNLVYDRGTTFGLKTGGRIESILVSLPLTARWEYDHKPEEGSEEWKLLDACINPKEWL</sequence>
<protein>
    <recommendedName>
        <fullName>Oxygen-dependent coproporphyrinogen-III oxidase, chloroplastic</fullName>
        <shortName>Coprogen oxidase</shortName>
        <shortName>Coproporphyrinogenase</shortName>
        <ecNumber>1.3.3.3</ecNumber>
    </recommendedName>
</protein>
<organism>
    <name type="scientific">Hordeum vulgare</name>
    <name type="common">Barley</name>
    <dbReference type="NCBI Taxonomy" id="4513"/>
    <lineage>
        <taxon>Eukaryota</taxon>
        <taxon>Viridiplantae</taxon>
        <taxon>Streptophyta</taxon>
        <taxon>Embryophyta</taxon>
        <taxon>Tracheophyta</taxon>
        <taxon>Spermatophyta</taxon>
        <taxon>Magnoliopsida</taxon>
        <taxon>Liliopsida</taxon>
        <taxon>Poales</taxon>
        <taxon>Poaceae</taxon>
        <taxon>BOP clade</taxon>
        <taxon>Pooideae</taxon>
        <taxon>Triticodae</taxon>
        <taxon>Triticeae</taxon>
        <taxon>Hordeinae</taxon>
        <taxon>Hordeum</taxon>
    </lineage>
</organism>
<accession>Q42840</accession>
<comment type="function">
    <text evidence="1">Involved in the heme and chlorophyll biosynthesis. Catalyzes the aerobic oxidative decarboxylation of propionate groups of rings A and B of coproporphyrinogen-III to yield the vinyl groups in protoporphyrinogen-IX (By similarity).</text>
</comment>
<comment type="catalytic activity">
    <reaction>
        <text>coproporphyrinogen III + O2 + 2 H(+) = protoporphyrinogen IX + 2 CO2 + 2 H2O</text>
        <dbReference type="Rhea" id="RHEA:18257"/>
        <dbReference type="ChEBI" id="CHEBI:15377"/>
        <dbReference type="ChEBI" id="CHEBI:15378"/>
        <dbReference type="ChEBI" id="CHEBI:15379"/>
        <dbReference type="ChEBI" id="CHEBI:16526"/>
        <dbReference type="ChEBI" id="CHEBI:57307"/>
        <dbReference type="ChEBI" id="CHEBI:57309"/>
        <dbReference type="EC" id="1.3.3.3"/>
    </reaction>
</comment>
<comment type="pathway">
    <text>Porphyrin-containing compound metabolism; protoporphyrin-IX biosynthesis; protoporphyrinogen-IX from coproporphyrinogen-III (O2 route): step 1/1.</text>
</comment>
<comment type="subunit">
    <text evidence="1">Homodimer.</text>
</comment>
<comment type="subcellular location">
    <subcellularLocation>
        <location evidence="4">Plastid</location>
        <location evidence="4">Chloroplast</location>
    </subcellularLocation>
</comment>
<comment type="similarity">
    <text evidence="4">Belongs to the aerobic coproporphyrinogen-III oxidase family.</text>
</comment>
<dbReference type="EC" id="1.3.3.3"/>
<dbReference type="EMBL" id="X82830">
    <property type="protein sequence ID" value="CAA58037.1"/>
    <property type="molecule type" value="mRNA"/>
</dbReference>
<dbReference type="PIR" id="T04486">
    <property type="entry name" value="T04486"/>
</dbReference>
<dbReference type="SMR" id="Q42840"/>
<dbReference type="ChEMBL" id="CHEMBL2366495"/>
<dbReference type="UniPathway" id="UPA00251">
    <property type="reaction ID" value="UER00322"/>
</dbReference>
<dbReference type="ExpressionAtlas" id="Q42840">
    <property type="expression patterns" value="baseline and differential"/>
</dbReference>
<dbReference type="GO" id="GO:0009570">
    <property type="term" value="C:chloroplast stroma"/>
    <property type="evidence" value="ECO:0007669"/>
    <property type="project" value="TreeGrafter"/>
</dbReference>
<dbReference type="GO" id="GO:0004109">
    <property type="term" value="F:coproporphyrinogen oxidase activity"/>
    <property type="evidence" value="ECO:0007669"/>
    <property type="project" value="UniProtKB-EC"/>
</dbReference>
<dbReference type="GO" id="GO:0042803">
    <property type="term" value="F:protein homodimerization activity"/>
    <property type="evidence" value="ECO:0000250"/>
    <property type="project" value="UniProtKB"/>
</dbReference>
<dbReference type="GO" id="GO:0015995">
    <property type="term" value="P:chlorophyll biosynthetic process"/>
    <property type="evidence" value="ECO:0007669"/>
    <property type="project" value="UniProtKB-KW"/>
</dbReference>
<dbReference type="GO" id="GO:0006782">
    <property type="term" value="P:protoporphyrinogen IX biosynthetic process"/>
    <property type="evidence" value="ECO:0007669"/>
    <property type="project" value="UniProtKB-UniPathway"/>
</dbReference>
<dbReference type="FunFam" id="3.40.1500.10:FF:000003">
    <property type="entry name" value="oxygen-dependent coproporphyrinogen-III oxidase, chloroplastic"/>
    <property type="match status" value="1"/>
</dbReference>
<dbReference type="Gene3D" id="3.40.1500.10">
    <property type="entry name" value="Coproporphyrinogen III oxidase, aerobic"/>
    <property type="match status" value="1"/>
</dbReference>
<dbReference type="InterPro" id="IPR001260">
    <property type="entry name" value="Coprogen_oxidase_aer"/>
</dbReference>
<dbReference type="InterPro" id="IPR036406">
    <property type="entry name" value="Coprogen_oxidase_aer_sf"/>
</dbReference>
<dbReference type="InterPro" id="IPR018375">
    <property type="entry name" value="Coprogen_oxidase_CS"/>
</dbReference>
<dbReference type="NCBIfam" id="NF003727">
    <property type="entry name" value="PRK05330.1"/>
    <property type="match status" value="1"/>
</dbReference>
<dbReference type="PANTHER" id="PTHR10755">
    <property type="entry name" value="COPROPORPHYRINOGEN III OXIDASE, MITOCHONDRIAL"/>
    <property type="match status" value="1"/>
</dbReference>
<dbReference type="PANTHER" id="PTHR10755:SF0">
    <property type="entry name" value="OXYGEN-DEPENDENT COPROPORPHYRINOGEN-III OXIDASE, MITOCHONDRIAL"/>
    <property type="match status" value="1"/>
</dbReference>
<dbReference type="Pfam" id="PF01218">
    <property type="entry name" value="Coprogen_oxidas"/>
    <property type="match status" value="1"/>
</dbReference>
<dbReference type="PIRSF" id="PIRSF000166">
    <property type="entry name" value="Coproporphyri_ox"/>
    <property type="match status" value="1"/>
</dbReference>
<dbReference type="PRINTS" id="PR00073">
    <property type="entry name" value="COPRGNOXDASE"/>
</dbReference>
<dbReference type="SUPFAM" id="SSF102886">
    <property type="entry name" value="Coproporphyrinogen III oxidase"/>
    <property type="match status" value="1"/>
</dbReference>
<dbReference type="PROSITE" id="PS01021">
    <property type="entry name" value="COPROGEN_OXIDASE"/>
    <property type="match status" value="1"/>
</dbReference>